<protein>
    <recommendedName>
        <fullName evidence="1">Chaperonin GroEL, chloroplastic</fullName>
        <ecNumber evidence="1">5.6.1.7</ecNumber>
    </recommendedName>
    <alternativeName>
        <fullName evidence="1">60 kDa chaperonin</fullName>
    </alternativeName>
    <alternativeName>
        <fullName evidence="1">Chaperonin-60</fullName>
        <shortName evidence="1">Cpn60</shortName>
    </alternativeName>
</protein>
<feature type="chain" id="PRO_0000063624" description="Chaperonin GroEL, chloroplastic">
    <location>
        <begin position="1"/>
        <end position="528"/>
    </location>
</feature>
<feature type="binding site" evidence="1">
    <location>
        <begin position="29"/>
        <end position="32"/>
    </location>
    <ligand>
        <name>ATP</name>
        <dbReference type="ChEBI" id="CHEBI:30616"/>
    </ligand>
</feature>
<feature type="binding site" evidence="1">
    <location>
        <begin position="86"/>
        <end position="90"/>
    </location>
    <ligand>
        <name>ATP</name>
        <dbReference type="ChEBI" id="CHEBI:30616"/>
    </ligand>
</feature>
<feature type="binding site" evidence="1">
    <location>
        <position position="414"/>
    </location>
    <ligand>
        <name>ATP</name>
        <dbReference type="ChEBI" id="CHEBI:30616"/>
    </ligand>
</feature>
<feature type="binding site" evidence="1">
    <location>
        <position position="496"/>
    </location>
    <ligand>
        <name>ATP</name>
        <dbReference type="ChEBI" id="CHEBI:30616"/>
    </ligand>
</feature>
<name>CH60_GRATL</name>
<organism>
    <name type="scientific">Gracilaria tenuistipitata var. liui</name>
    <name type="common">Red alga</name>
    <dbReference type="NCBI Taxonomy" id="285951"/>
    <lineage>
        <taxon>Eukaryota</taxon>
        <taxon>Rhodophyta</taxon>
        <taxon>Florideophyceae</taxon>
        <taxon>Rhodymeniophycidae</taxon>
        <taxon>Gracilariales</taxon>
        <taxon>Gracilariaceae</taxon>
        <taxon>Gracilaria</taxon>
        <taxon>Gracilaria tenuistipitata</taxon>
    </lineage>
</organism>
<evidence type="ECO:0000255" key="1">
    <source>
        <dbReference type="HAMAP-Rule" id="MF_00600"/>
    </source>
</evidence>
<reference key="1">
    <citation type="journal article" date="2004" name="J. Mol. Evol.">
        <title>Comparative analysis of the complete plastid genome sequence of the red alga Gracilaria tenuistipitata var. liui provides insights into the evolution of rhodoplasts and their relationship to other plastids.</title>
        <authorList>
            <person name="Hagopian J.C."/>
            <person name="Reis M."/>
            <person name="Kitajima J.P."/>
            <person name="Bhattacharya D."/>
            <person name="de Oliveira M.C."/>
        </authorList>
    </citation>
    <scope>NUCLEOTIDE SEQUENCE [LARGE SCALE GENOMIC DNA]</scope>
</reference>
<keyword id="KW-0067">ATP-binding</keyword>
<keyword id="KW-0143">Chaperone</keyword>
<keyword id="KW-0150">Chloroplast</keyword>
<keyword id="KW-0413">Isomerase</keyword>
<keyword id="KW-0547">Nucleotide-binding</keyword>
<keyword id="KW-0934">Plastid</keyword>
<comment type="function">
    <text evidence="1">Together with its co-chaperonin GroES, plays an essential role in assisting protein folding. The GroEL-GroES system forms a nano-cage that allows encapsulation of the non-native substrate proteins and provides a physical environment optimized to promote and accelerate protein folding.</text>
</comment>
<comment type="catalytic activity">
    <reaction evidence="1">
        <text>ATP + H2O + a folded polypeptide = ADP + phosphate + an unfolded polypeptide.</text>
        <dbReference type="EC" id="5.6.1.7"/>
    </reaction>
</comment>
<comment type="subunit">
    <text evidence="1">Forms a cylinder of 14 subunits composed of two heptameric rings stacked back-to-back. Interacts with the co-chaperonin GroES.</text>
</comment>
<comment type="subcellular location">
    <subcellularLocation>
        <location evidence="1">Plastid</location>
        <location evidence="1">Chloroplast</location>
    </subcellularLocation>
</comment>
<comment type="similarity">
    <text evidence="1">Belongs to the chaperonin (HSP60) family.</text>
</comment>
<proteinExistence type="inferred from homology"/>
<geneLocation type="chloroplast"/>
<gene>
    <name evidence="1" type="primary">groEL</name>
    <name evidence="1" type="synonym">groL</name>
    <name type="ordered locus">Grc000043</name>
</gene>
<dbReference type="EC" id="5.6.1.7" evidence="1"/>
<dbReference type="EMBL" id="AY673996">
    <property type="protein sequence ID" value="AAT79624.1"/>
    <property type="molecule type" value="Genomic_DNA"/>
</dbReference>
<dbReference type="RefSeq" id="YP_063549.1">
    <property type="nucleotide sequence ID" value="NC_006137.1"/>
</dbReference>
<dbReference type="SMR" id="Q6B911"/>
<dbReference type="GeneID" id="2944044"/>
<dbReference type="GO" id="GO:0009507">
    <property type="term" value="C:chloroplast"/>
    <property type="evidence" value="ECO:0007669"/>
    <property type="project" value="UniProtKB-SubCell"/>
</dbReference>
<dbReference type="GO" id="GO:0005524">
    <property type="term" value="F:ATP binding"/>
    <property type="evidence" value="ECO:0007669"/>
    <property type="project" value="UniProtKB-UniRule"/>
</dbReference>
<dbReference type="GO" id="GO:0140662">
    <property type="term" value="F:ATP-dependent protein folding chaperone"/>
    <property type="evidence" value="ECO:0007669"/>
    <property type="project" value="InterPro"/>
</dbReference>
<dbReference type="GO" id="GO:0016853">
    <property type="term" value="F:isomerase activity"/>
    <property type="evidence" value="ECO:0007669"/>
    <property type="project" value="UniProtKB-KW"/>
</dbReference>
<dbReference type="GO" id="GO:0051082">
    <property type="term" value="F:unfolded protein binding"/>
    <property type="evidence" value="ECO:0007669"/>
    <property type="project" value="UniProtKB-UniRule"/>
</dbReference>
<dbReference type="GO" id="GO:0042026">
    <property type="term" value="P:protein refolding"/>
    <property type="evidence" value="ECO:0007669"/>
    <property type="project" value="UniProtKB-UniRule"/>
</dbReference>
<dbReference type="CDD" id="cd03344">
    <property type="entry name" value="GroEL"/>
    <property type="match status" value="1"/>
</dbReference>
<dbReference type="FunFam" id="3.50.7.10:FF:000001">
    <property type="entry name" value="60 kDa chaperonin"/>
    <property type="match status" value="1"/>
</dbReference>
<dbReference type="Gene3D" id="3.50.7.10">
    <property type="entry name" value="GroEL"/>
    <property type="match status" value="1"/>
</dbReference>
<dbReference type="Gene3D" id="1.10.560.10">
    <property type="entry name" value="GroEL-like equatorial domain"/>
    <property type="match status" value="1"/>
</dbReference>
<dbReference type="Gene3D" id="3.30.260.10">
    <property type="entry name" value="TCP-1-like chaperonin intermediate domain"/>
    <property type="match status" value="1"/>
</dbReference>
<dbReference type="HAMAP" id="MF_00600">
    <property type="entry name" value="CH60"/>
    <property type="match status" value="1"/>
</dbReference>
<dbReference type="InterPro" id="IPR018370">
    <property type="entry name" value="Chaperonin_Cpn60_CS"/>
</dbReference>
<dbReference type="InterPro" id="IPR001844">
    <property type="entry name" value="Cpn60/GroEL"/>
</dbReference>
<dbReference type="InterPro" id="IPR002423">
    <property type="entry name" value="Cpn60/GroEL/TCP-1"/>
</dbReference>
<dbReference type="InterPro" id="IPR027409">
    <property type="entry name" value="GroEL-like_apical_dom_sf"/>
</dbReference>
<dbReference type="InterPro" id="IPR027413">
    <property type="entry name" value="GROEL-like_equatorial_sf"/>
</dbReference>
<dbReference type="InterPro" id="IPR027410">
    <property type="entry name" value="TCP-1-like_intermed_sf"/>
</dbReference>
<dbReference type="NCBIfam" id="TIGR02348">
    <property type="entry name" value="GroEL"/>
    <property type="match status" value="1"/>
</dbReference>
<dbReference type="NCBIfam" id="NF000592">
    <property type="entry name" value="PRK00013.1"/>
    <property type="match status" value="1"/>
</dbReference>
<dbReference type="NCBIfam" id="NF009487">
    <property type="entry name" value="PRK12849.1"/>
    <property type="match status" value="1"/>
</dbReference>
<dbReference type="NCBIfam" id="NF009488">
    <property type="entry name" value="PRK12850.1"/>
    <property type="match status" value="1"/>
</dbReference>
<dbReference type="NCBIfam" id="NF009489">
    <property type="entry name" value="PRK12851.1"/>
    <property type="match status" value="1"/>
</dbReference>
<dbReference type="PANTHER" id="PTHR45633">
    <property type="entry name" value="60 KDA HEAT SHOCK PROTEIN, MITOCHONDRIAL"/>
    <property type="match status" value="1"/>
</dbReference>
<dbReference type="Pfam" id="PF00118">
    <property type="entry name" value="Cpn60_TCP1"/>
    <property type="match status" value="1"/>
</dbReference>
<dbReference type="PRINTS" id="PR00298">
    <property type="entry name" value="CHAPERONIN60"/>
</dbReference>
<dbReference type="SUPFAM" id="SSF52029">
    <property type="entry name" value="GroEL apical domain-like"/>
    <property type="match status" value="1"/>
</dbReference>
<dbReference type="SUPFAM" id="SSF48592">
    <property type="entry name" value="GroEL equatorial domain-like"/>
    <property type="match status" value="1"/>
</dbReference>
<dbReference type="SUPFAM" id="SSF54849">
    <property type="entry name" value="GroEL-intermediate domain like"/>
    <property type="match status" value="1"/>
</dbReference>
<dbReference type="PROSITE" id="PS00296">
    <property type="entry name" value="CHAPERONINS_CPN60"/>
    <property type="match status" value="1"/>
</dbReference>
<sequence>MAKKILYQDNARKALEKGMDTLVEAVAITLGPKGRNVVLERKFGAPQIINDGVTIAKEIELQDLAENTGVALIRQAASKTNDVAGDGTTTATVLAHAIVKQGLKNVAAGANPITLKKGIQKAVKFVVGKIAEYSKPICSMQDVTHIGSISSGNDVEVGTMIANAIQQVGKEGIISLEEGQSTSTELDIKEGMKFDKGFISPYFVTDTSRMEVIQDNPYILITDKKITLIQQELLPILEKVTKTGRPLLIIAEDIEKEALATIIVNKLRGIINVVAVRAPGFGDRRKLLLEDIAILTSGVVITQDMGLSLDSMSLDQLGSARRVQITKDSTTIVADAQKDLIQARCDQIRRQLEAATNSYAKDKLHERLAKLSGGVAVVKVGAATETEMRDKKLRLEDAINATKAAIEEGIVPGGGSTFVHLSEVLRVWAINNLVEEELVGALIIVDSLLHPLKRIVENAGNNGSIIIEKIKNSNFSTGYNADIGQIVDMYKEGIIDPAKVTRSALQNAASIASMILTTECLIAEQVDN</sequence>
<accession>Q6B911</accession>